<proteinExistence type="inferred from homology"/>
<sequence length="104" mass="11750">MALKLRRNDEIIILTGKDKGKKGIIKNILSSNKAIVNGLNLVKKHQKPLPSQNKNGGILEKEAPIQISNIAIFNPELKKADRIGFRFEEGKKVRFFKSNKKTIK</sequence>
<gene>
    <name evidence="1" type="primary">rplX</name>
    <name type="ordered locus">BUsg_494</name>
</gene>
<dbReference type="EMBL" id="AE013218">
    <property type="protein sequence ID" value="AAM68037.1"/>
    <property type="molecule type" value="Genomic_DNA"/>
</dbReference>
<dbReference type="RefSeq" id="WP_011054003.1">
    <property type="nucleotide sequence ID" value="NC_004061.1"/>
</dbReference>
<dbReference type="SMR" id="Q8K961"/>
<dbReference type="STRING" id="198804.BUsg_494"/>
<dbReference type="GeneID" id="93003969"/>
<dbReference type="KEGG" id="bas:BUsg_494"/>
<dbReference type="eggNOG" id="COG0198">
    <property type="taxonomic scope" value="Bacteria"/>
</dbReference>
<dbReference type="HOGENOM" id="CLU_093315_2_2_6"/>
<dbReference type="Proteomes" id="UP000000416">
    <property type="component" value="Chromosome"/>
</dbReference>
<dbReference type="GO" id="GO:1990904">
    <property type="term" value="C:ribonucleoprotein complex"/>
    <property type="evidence" value="ECO:0007669"/>
    <property type="project" value="UniProtKB-KW"/>
</dbReference>
<dbReference type="GO" id="GO:0005840">
    <property type="term" value="C:ribosome"/>
    <property type="evidence" value="ECO:0007669"/>
    <property type="project" value="UniProtKB-KW"/>
</dbReference>
<dbReference type="GO" id="GO:0019843">
    <property type="term" value="F:rRNA binding"/>
    <property type="evidence" value="ECO:0007669"/>
    <property type="project" value="UniProtKB-UniRule"/>
</dbReference>
<dbReference type="GO" id="GO:0003735">
    <property type="term" value="F:structural constituent of ribosome"/>
    <property type="evidence" value="ECO:0007669"/>
    <property type="project" value="InterPro"/>
</dbReference>
<dbReference type="GO" id="GO:0006412">
    <property type="term" value="P:translation"/>
    <property type="evidence" value="ECO:0007669"/>
    <property type="project" value="UniProtKB-UniRule"/>
</dbReference>
<dbReference type="CDD" id="cd06089">
    <property type="entry name" value="KOW_RPL26"/>
    <property type="match status" value="1"/>
</dbReference>
<dbReference type="FunFam" id="2.30.30.30:FF:000004">
    <property type="entry name" value="50S ribosomal protein L24"/>
    <property type="match status" value="1"/>
</dbReference>
<dbReference type="Gene3D" id="2.30.30.30">
    <property type="match status" value="1"/>
</dbReference>
<dbReference type="HAMAP" id="MF_01326_B">
    <property type="entry name" value="Ribosomal_uL24_B"/>
    <property type="match status" value="1"/>
</dbReference>
<dbReference type="InterPro" id="IPR005824">
    <property type="entry name" value="KOW"/>
</dbReference>
<dbReference type="InterPro" id="IPR014722">
    <property type="entry name" value="Rib_uL2_dom2"/>
</dbReference>
<dbReference type="InterPro" id="IPR003256">
    <property type="entry name" value="Ribosomal_uL24"/>
</dbReference>
<dbReference type="InterPro" id="IPR005825">
    <property type="entry name" value="Ribosomal_uL24_CS"/>
</dbReference>
<dbReference type="InterPro" id="IPR041988">
    <property type="entry name" value="Ribosomal_uL24_KOW"/>
</dbReference>
<dbReference type="InterPro" id="IPR008991">
    <property type="entry name" value="Translation_prot_SH3-like_sf"/>
</dbReference>
<dbReference type="NCBIfam" id="TIGR01079">
    <property type="entry name" value="rplX_bact"/>
    <property type="match status" value="1"/>
</dbReference>
<dbReference type="PANTHER" id="PTHR12903">
    <property type="entry name" value="MITOCHONDRIAL RIBOSOMAL PROTEIN L24"/>
    <property type="match status" value="1"/>
</dbReference>
<dbReference type="Pfam" id="PF00467">
    <property type="entry name" value="KOW"/>
    <property type="match status" value="1"/>
</dbReference>
<dbReference type="Pfam" id="PF17136">
    <property type="entry name" value="ribosomal_L24"/>
    <property type="match status" value="1"/>
</dbReference>
<dbReference type="SUPFAM" id="SSF50104">
    <property type="entry name" value="Translation proteins SH3-like domain"/>
    <property type="match status" value="1"/>
</dbReference>
<dbReference type="PROSITE" id="PS01108">
    <property type="entry name" value="RIBOSOMAL_L24"/>
    <property type="match status" value="1"/>
</dbReference>
<name>RL24_BUCAP</name>
<accession>Q8K961</accession>
<keyword id="KW-0687">Ribonucleoprotein</keyword>
<keyword id="KW-0689">Ribosomal protein</keyword>
<keyword id="KW-0694">RNA-binding</keyword>
<keyword id="KW-0699">rRNA-binding</keyword>
<reference key="1">
    <citation type="journal article" date="2002" name="Science">
        <title>50 million years of genomic stasis in endosymbiotic bacteria.</title>
        <authorList>
            <person name="Tamas I."/>
            <person name="Klasson L."/>
            <person name="Canbaeck B."/>
            <person name="Naeslund A.K."/>
            <person name="Eriksson A.-S."/>
            <person name="Wernegreen J.J."/>
            <person name="Sandstroem J.P."/>
            <person name="Moran N.A."/>
            <person name="Andersson S.G.E."/>
        </authorList>
    </citation>
    <scope>NUCLEOTIDE SEQUENCE [LARGE SCALE GENOMIC DNA]</scope>
    <source>
        <strain>Sg</strain>
    </source>
</reference>
<organism>
    <name type="scientific">Buchnera aphidicola subsp. Schizaphis graminum (strain Sg)</name>
    <dbReference type="NCBI Taxonomy" id="198804"/>
    <lineage>
        <taxon>Bacteria</taxon>
        <taxon>Pseudomonadati</taxon>
        <taxon>Pseudomonadota</taxon>
        <taxon>Gammaproteobacteria</taxon>
        <taxon>Enterobacterales</taxon>
        <taxon>Erwiniaceae</taxon>
        <taxon>Buchnera</taxon>
    </lineage>
</organism>
<comment type="function">
    <text evidence="1">One of two assembly initiator proteins, it binds directly to the 5'-end of the 23S rRNA, where it nucleates assembly of the 50S subunit.</text>
</comment>
<comment type="function">
    <text evidence="1">One of the proteins that surrounds the polypeptide exit tunnel on the outside of the subunit.</text>
</comment>
<comment type="subunit">
    <text evidence="1">Part of the 50S ribosomal subunit.</text>
</comment>
<comment type="similarity">
    <text evidence="1">Belongs to the universal ribosomal protein uL24 family.</text>
</comment>
<protein>
    <recommendedName>
        <fullName evidence="1">Large ribosomal subunit protein uL24</fullName>
    </recommendedName>
    <alternativeName>
        <fullName evidence="2">50S ribosomal protein L24</fullName>
    </alternativeName>
</protein>
<feature type="chain" id="PRO_0000130635" description="Large ribosomal subunit protein uL24">
    <location>
        <begin position="1"/>
        <end position="104"/>
    </location>
</feature>
<evidence type="ECO:0000255" key="1">
    <source>
        <dbReference type="HAMAP-Rule" id="MF_01326"/>
    </source>
</evidence>
<evidence type="ECO:0000305" key="2"/>